<proteinExistence type="evidence at transcript level"/>
<accession>P07052</accession>
<keyword id="KW-1015">Disulfide bond</keyword>
<keyword id="KW-0568">Pathogenesis-related protein</keyword>
<keyword id="KW-0611">Plant defense</keyword>
<keyword id="KW-1185">Reference proteome</keyword>
<keyword id="KW-0732">Signal</keyword>
<keyword id="KW-0926">Vacuole</keyword>
<name>PRR2_TOBAC</name>
<feature type="signal peptide">
    <location>
        <begin position="1"/>
        <end position="25"/>
    </location>
</feature>
<feature type="chain" id="PRO_0000034029" description="Pathogenesis-related protein R minor form">
    <location>
        <begin position="26"/>
        <end position="226"/>
    </location>
</feature>
<feature type="disulfide bond" evidence="1">
    <location>
        <begin position="34"/>
        <end position="225"/>
    </location>
</feature>
<feature type="disulfide bond" evidence="1">
    <location>
        <begin position="75"/>
        <end position="85"/>
    </location>
</feature>
<feature type="disulfide bond" evidence="1">
    <location>
        <begin position="90"/>
        <end position="96"/>
    </location>
</feature>
<feature type="disulfide bond" evidence="1">
    <location>
        <begin position="140"/>
        <end position="214"/>
    </location>
</feature>
<feature type="disulfide bond" evidence="1">
    <location>
        <begin position="145"/>
        <end position="197"/>
    </location>
</feature>
<feature type="disulfide bond" evidence="1">
    <location>
        <begin position="153"/>
        <end position="163"/>
    </location>
</feature>
<feature type="disulfide bond" evidence="1">
    <location>
        <begin position="167"/>
        <end position="176"/>
    </location>
</feature>
<feature type="disulfide bond" evidence="1">
    <location>
        <begin position="177"/>
        <end position="184"/>
    </location>
</feature>
<comment type="subcellular location">
    <subcellularLocation>
        <location>Vacuole</location>
    </subcellularLocation>
</comment>
<comment type="miscellaneous">
    <text>PR proteins are acid-soluble, protease-resistant proteins which accumulate in the intercellular spaces of many plants as a result of the hypersensitive reaction to a pathogen.</text>
</comment>
<comment type="miscellaneous">
    <text>PR-R exists as two isoforms in tobacco, a major and a minor form.</text>
</comment>
<comment type="similarity">
    <text evidence="1">Belongs to the thaumatin family.</text>
</comment>
<dbReference type="EMBL" id="X03913">
    <property type="protein sequence ID" value="CAA27548.1"/>
    <property type="molecule type" value="mRNA"/>
</dbReference>
<dbReference type="EMBL" id="X15223">
    <property type="protein sequence ID" value="CAA33292.1"/>
    <property type="molecule type" value="Genomic_DNA"/>
</dbReference>
<dbReference type="PIR" id="JH0231">
    <property type="entry name" value="JH0231"/>
</dbReference>
<dbReference type="RefSeq" id="NP_001311972.1">
    <property type="nucleotide sequence ID" value="NM_001325043.1"/>
</dbReference>
<dbReference type="SMR" id="P07052"/>
<dbReference type="STRING" id="4097.P07052"/>
<dbReference type="PaxDb" id="4097-P07052"/>
<dbReference type="GeneID" id="107769943"/>
<dbReference type="KEGG" id="nta:107769943"/>
<dbReference type="OrthoDB" id="430315at2759"/>
<dbReference type="Proteomes" id="UP000084051">
    <property type="component" value="Unplaced"/>
</dbReference>
<dbReference type="GO" id="GO:0005773">
    <property type="term" value="C:vacuole"/>
    <property type="evidence" value="ECO:0007669"/>
    <property type="project" value="UniProtKB-SubCell"/>
</dbReference>
<dbReference type="GO" id="GO:0006952">
    <property type="term" value="P:defense response"/>
    <property type="evidence" value="ECO:0000318"/>
    <property type="project" value="GO_Central"/>
</dbReference>
<dbReference type="CDD" id="cd09217">
    <property type="entry name" value="TLP-P"/>
    <property type="match status" value="1"/>
</dbReference>
<dbReference type="FunFam" id="2.60.110.10:FF:000003">
    <property type="entry name" value="Thaumatin I"/>
    <property type="match status" value="1"/>
</dbReference>
<dbReference type="Gene3D" id="2.60.110.10">
    <property type="entry name" value="Thaumatin"/>
    <property type="match status" value="1"/>
</dbReference>
<dbReference type="InterPro" id="IPR037176">
    <property type="entry name" value="Osmotin/thaumatin-like_sf"/>
</dbReference>
<dbReference type="InterPro" id="IPR001938">
    <property type="entry name" value="Thaumatin"/>
</dbReference>
<dbReference type="InterPro" id="IPR017949">
    <property type="entry name" value="Thaumatin_CS"/>
</dbReference>
<dbReference type="PANTHER" id="PTHR31048">
    <property type="entry name" value="OS03G0233200 PROTEIN"/>
    <property type="match status" value="1"/>
</dbReference>
<dbReference type="Pfam" id="PF00314">
    <property type="entry name" value="Thaumatin"/>
    <property type="match status" value="1"/>
</dbReference>
<dbReference type="PIRSF" id="PIRSF002703">
    <property type="entry name" value="Thaumatin"/>
    <property type="match status" value="1"/>
</dbReference>
<dbReference type="PRINTS" id="PR00347">
    <property type="entry name" value="THAUMATIN"/>
</dbReference>
<dbReference type="SMART" id="SM00205">
    <property type="entry name" value="THN"/>
    <property type="match status" value="1"/>
</dbReference>
<dbReference type="SUPFAM" id="SSF49870">
    <property type="entry name" value="Osmotin, thaumatin-like protein"/>
    <property type="match status" value="1"/>
</dbReference>
<dbReference type="PROSITE" id="PS00316">
    <property type="entry name" value="THAUMATIN_1"/>
    <property type="match status" value="1"/>
</dbReference>
<dbReference type="PROSITE" id="PS51367">
    <property type="entry name" value="THAUMATIN_2"/>
    <property type="match status" value="1"/>
</dbReference>
<protein>
    <recommendedName>
        <fullName>Pathogenesis-related protein R minor form</fullName>
        <shortName>PR-R</shortName>
    </recommendedName>
    <alternativeName>
        <fullName>PROB12</fullName>
    </alternativeName>
    <alternativeName>
        <fullName>Thaumatin-like protein E2</fullName>
    </alternativeName>
</protein>
<reference key="1">
    <citation type="journal article" date="1986" name="Nature">
        <title>A tobacco mosaic virus-induced tobacco protein is homologous to the sweet-tasting protein thaumatin.</title>
        <authorList>
            <person name="Cornelissen B.J.C."/>
            <person name="Hooft van Huijsduijnen R.A.M."/>
            <person name="Bol J.F."/>
        </authorList>
    </citation>
    <scope>NUCLEOTIDE SEQUENCE [MRNA]</scope>
</reference>
<reference key="2">
    <citation type="journal article" date="1989" name="Plant Mol. Biol.">
        <title>Structure of tobacco genes encoding thaumatin-like proteins.</title>
        <authorList>
            <person name="van Kan J.A.L."/>
            <person name="van de Rhee M.D."/>
            <person name="Zuidema D."/>
            <person name="Cornelissen B.J.C."/>
            <person name="Bol J.F."/>
        </authorList>
    </citation>
    <scope>NUCLEOTIDE SEQUENCE</scope>
    <source>
        <strain>cv. Samsun NN</strain>
    </source>
</reference>
<evidence type="ECO:0000255" key="1">
    <source>
        <dbReference type="PROSITE-ProRule" id="PRU00699"/>
    </source>
</evidence>
<organism>
    <name type="scientific">Nicotiana tabacum</name>
    <name type="common">Common tobacco</name>
    <dbReference type="NCBI Taxonomy" id="4097"/>
    <lineage>
        <taxon>Eukaryota</taxon>
        <taxon>Viridiplantae</taxon>
        <taxon>Streptophyta</taxon>
        <taxon>Embryophyta</taxon>
        <taxon>Tracheophyta</taxon>
        <taxon>Spermatophyta</taxon>
        <taxon>Magnoliopsida</taxon>
        <taxon>eudicotyledons</taxon>
        <taxon>Gunneridae</taxon>
        <taxon>Pentapetalae</taxon>
        <taxon>asterids</taxon>
        <taxon>lamiids</taxon>
        <taxon>Solanales</taxon>
        <taxon>Solanaceae</taxon>
        <taxon>Nicotianoideae</taxon>
        <taxon>Nicotianeae</taxon>
        <taxon>Nicotiana</taxon>
    </lineage>
</organism>
<sequence length="226" mass="24552">MNFLKSFPFYAFLCFGQYFVAVTHAATFDIVNQCTYTVWAAASPGGGRQLNSGQSWSINVNPGTVQARIWGRTNCNFDGSGRGNCETGDCNGMLECQGYGKPPNTLAEFALNQPNQDFVDISLVDGFNIPMEFSPTNGGCRNLRCTAPINEQCPAQLKTQGGCNNPCTVIKTNEFCCTNGPGSCGPTDLSRFFKARCPDAYSYPQDDPPSLFTCPPGTNYRVVFCP</sequence>